<protein>
    <recommendedName>
        <fullName evidence="1">Protein Ycf2</fullName>
    </recommendedName>
</protein>
<name>YCF2_CYCTA</name>
<dbReference type="EMBL" id="AP009339">
    <property type="protein sequence ID" value="BAF64991.1"/>
    <property type="molecule type" value="Genomic_DNA"/>
</dbReference>
<dbReference type="EMBL" id="AP009339">
    <property type="protein sequence ID" value="BAF65030.1"/>
    <property type="molecule type" value="Genomic_DNA"/>
</dbReference>
<dbReference type="GO" id="GO:0009570">
    <property type="term" value="C:chloroplast stroma"/>
    <property type="evidence" value="ECO:0007669"/>
    <property type="project" value="UniProtKB-SubCell"/>
</dbReference>
<dbReference type="GO" id="GO:0005524">
    <property type="term" value="F:ATP binding"/>
    <property type="evidence" value="ECO:0007669"/>
    <property type="project" value="UniProtKB-KW"/>
</dbReference>
<dbReference type="GO" id="GO:0016887">
    <property type="term" value="F:ATP hydrolysis activity"/>
    <property type="evidence" value="ECO:0007669"/>
    <property type="project" value="InterPro"/>
</dbReference>
<dbReference type="CDD" id="cd19505">
    <property type="entry name" value="RecA-like_Ycf2"/>
    <property type="match status" value="1"/>
</dbReference>
<dbReference type="Gene3D" id="1.10.8.60">
    <property type="match status" value="1"/>
</dbReference>
<dbReference type="Gene3D" id="3.40.50.300">
    <property type="entry name" value="P-loop containing nucleotide triphosphate hydrolases"/>
    <property type="match status" value="1"/>
</dbReference>
<dbReference type="HAMAP" id="MF_01330">
    <property type="entry name" value="Ycf2"/>
    <property type="match status" value="1"/>
</dbReference>
<dbReference type="InterPro" id="IPR003593">
    <property type="entry name" value="AAA+_ATPase"/>
</dbReference>
<dbReference type="InterPro" id="IPR003959">
    <property type="entry name" value="ATPase_AAA_core"/>
</dbReference>
<dbReference type="InterPro" id="IPR027417">
    <property type="entry name" value="P-loop_NTPase"/>
</dbReference>
<dbReference type="InterPro" id="IPR008543">
    <property type="entry name" value="Uncharacterised_Ycf2"/>
</dbReference>
<dbReference type="InterPro" id="IPR056777">
    <property type="entry name" value="Ycf2_N"/>
</dbReference>
<dbReference type="PANTHER" id="PTHR33078:SF100">
    <property type="entry name" value="PROTEIN YCF2"/>
    <property type="match status" value="1"/>
</dbReference>
<dbReference type="PANTHER" id="PTHR33078">
    <property type="entry name" value="PROTEIN YCF2-RELATED"/>
    <property type="match status" value="1"/>
</dbReference>
<dbReference type="Pfam" id="PF00004">
    <property type="entry name" value="AAA"/>
    <property type="match status" value="1"/>
</dbReference>
<dbReference type="Pfam" id="PF05695">
    <property type="entry name" value="Ycf2"/>
    <property type="match status" value="4"/>
</dbReference>
<dbReference type="SMART" id="SM00382">
    <property type="entry name" value="AAA"/>
    <property type="match status" value="1"/>
</dbReference>
<dbReference type="SUPFAM" id="SSF52540">
    <property type="entry name" value="P-loop containing nucleoside triphosphate hydrolases"/>
    <property type="match status" value="1"/>
</dbReference>
<gene>
    <name evidence="1" type="primary">ycf2-A</name>
</gene>
<gene>
    <name evidence="1" type="primary">ycf2-B</name>
</gene>
<sequence>MKRQKLKSWILKLEEIRSFQYLFNSWTELNLVRLFTKIVSHRERLIKLFDSRILSTLLLRDLRGSRSNQSLTIKGVVLLTLPVLIYHVNQKSMIERKKFYSMKLFPIPINYAEPRNETSEEYFESFNKNLLIFPHLFLSFPKGRKIYQSHLRNSKEDAWVLSKRKVCVMPAYNQIDSWGSRWWKNWIIEEILPSWKIPQGSIAKIEMSLKEKDVEHLKGFFEFYIDDLIRKDYDWEYHFDRVFMRNKQDTIDLSSKQQVEILGNNLICYLMSAFCEKMLFEAEGPFKQQKSKSIVESNNIKHFSHLRLSYQEKSEWGPRWWKKNMFQIWNSWGESDQIIAESSILLKEKGYLSFQNYAEFWQFYKDSFVSWEKDQQKLELSKDILKEKFIQLNDVNNDQLFSKIQNLLLDILYNFSESIFIKVNHSSQLKRSYNRSIDHFDPISENSEYGTNMNKKDEIISENQRPITWETHSERDEKDIDSEIDLTLNFTENEYWEPEKDLCERIFTNGYINKTEIEQLKERSILWDPSSSIRIERTKIKSDLSSKCLSEDSPIYWTKELFTEDKKSITENLFPKERKRFIENFTKSIRSYFFDILSIDEPCMGSSVTKKPIENFKLLKGQQDVFFRYFRGSEKNGIIDPWKIRTYFQNPSSNCAISLDPGCNMIRKNQRDINKLNCILFMNRSLSRNRFSSFCDQNKEQYIFHNNLRFKKRVLKITDQFALLITKPNQVYDNTLAPDIDYHVNQFYELNKNRFLDQIFNHKNKLKNQSLLILLNITDKENEYLDRIIEKELIQISSKKGSEIGTPLNNYRTETSNWYKLIRYKIHGHLKNAFNKLYSMNGSSRNLKDQIRTNWIENENLNNVSKDTINRHPSNWRKGQKEWFDHSILRTDKCINRNLNVYKWSNQTEYLKRCSKHLVSKQNDLKIVFDPIESCANRDSIGWSGSPNKKDYSKFSLIAENTVKIFLSKKSISHSAIFIPEFFIDKLKGMNDQLFNKLLKSIGVRIVHLKTFKPFLLDNHNLSQRSKFLIDERTVAQFFYHEMPVNRFIIDLFENEKNCMELFDNTDFSTISNDRDNWLNPVKLSNQSSSRASFYKANTLQFFDYSHHPRFNYKKRLPYYMERIHTKNHNLTYGQLFNISPIHSNLFSLSISEIRPVHLEKDTISLIKSQVSNIFLPKYLQQSGNQTFVSIYDLYKSFDLLTRLNPFVHDKIDISSIEEISTTPLTRERIANFEKTSCQPFLNRSDLEENNFDQYLKGGFSSNMGLIQTQSYRDDLLSEIFLKRKDKNQEMLHRIRDRFVKSSSTEGSKNRIENKAIDKRSTLFNFSKEERNLLPFCSPRLNERAKKQEMHRISQIESLFKKWDLFRAYTPWLLTSAWWKYLENLLLETFPEILLNSSDQLVSILHDIMHKSNLSWAISHQLWALLQCNLRTNILDKFFSLWNLCSFKEMINQKNESSVLSIWAHLRLLNAREYEYSILILFFVLGYFVLRYSFVVSSAFIELQIHLERIKDLMDPSYAIELQKLMDHPLPGLLFSMDIRDISIYFLDELIYSMRNRKFYSPIRRELNRSCFSMDISGKERELLVQFLITEKNISQFGSNLTHSHNFFKNEFDYQITEQPGLIYLIYLADTYQKDLMNHEFDQSRLTERWVFLAFCRKITSSQIFRGLNLTFYGKPFSLHLGSSLSKGILLIGPTETGRSYLVKGLAADSYVPLVRISLNKFLYDKGEYSNFLDIRSMNNVVQKMHQFNLTFELAKRMSPCIIWIPNIHELNVNYLTHFFLGLLVNHLSRDDEKDSTRNLLVIASTHIPKKVDPAPIAPNRLDRSINVRMLPIPQRQKEFPILLRSKGFDSEKELSCPKEFGSRTIGSNARDLAALANEALSISITQNKSVIGTDTIRLALYRQTWGLQSIDNQVGSGQNYEILPYKVGKAVIQNTLRRNSSMNPLSINNELWKKRFSYLSKWYLEPSIAGTTMKELTILPHILGCLAGSAARDSWFISGQNRENWIPLDRFAEHDFDLASGLLESLLVEFPWLGICRGKPDKNQITFAPQPKTRNHLNVMRKGVYSMVNKMFIYKEYELKFQQETPGAKQMDEKLVNNIVWAPRIWRLSFLRSNLFDRTKRPNELGFSYQFGLFQEEQASYCKRVRENLESLQKGPHKKGFYVHERNHSNARQKNLQHIQSQLEDISLQERFEIGIFQFSIQYQMRSKSSNKPMFFLGRRFLWDPTGFLFQDQHLVFSRREFFANEEMLRRLYITYGSIRRQEKHLFPKKSIQGAFHRYNSKFMTNSVINSWKQLPLAEKEHIEAFKRIQAIGIRLKRIQPYTPTFLYQRWLIENPQEKVDRFELLIHRQRWLETNSSLSNESFLYNTLSESYKYLSNLFLSNRMLLNQMTRTLLKNRWLFPKEIEHLIHTTKDRFHISILAGKNLSSSMKGQ</sequence>
<proteinExistence type="inferred from homology"/>
<comment type="function">
    <text evidence="1">Probable ATPase of unknown function. Its presence in a non-photosynthetic plant (Epifagus virginiana) and experiments in tobacco indicate that it has an essential function which is probably not related to photosynthesis.</text>
</comment>
<comment type="subcellular location">
    <subcellularLocation>
        <location evidence="1">Plastid</location>
        <location evidence="1">Chloroplast stroma</location>
    </subcellularLocation>
</comment>
<comment type="similarity">
    <text evidence="1">Belongs to the Ycf2 family.</text>
</comment>
<evidence type="ECO:0000255" key="1">
    <source>
        <dbReference type="HAMAP-Rule" id="MF_01330"/>
    </source>
</evidence>
<feature type="chain" id="PRO_0000343768" description="Protein Ycf2">
    <location>
        <begin position="1"/>
        <end position="2434"/>
    </location>
</feature>
<feature type="binding site" evidence="1">
    <location>
        <begin position="1693"/>
        <end position="1700"/>
    </location>
    <ligand>
        <name>ATP</name>
        <dbReference type="ChEBI" id="CHEBI:30616"/>
    </ligand>
</feature>
<keyword id="KW-0067">ATP-binding</keyword>
<keyword id="KW-0150">Chloroplast</keyword>
<keyword id="KW-0547">Nucleotide-binding</keyword>
<keyword id="KW-0934">Plastid</keyword>
<accession>A6H5M5</accession>
<organism>
    <name type="scientific">Cycas taitungensis</name>
    <name type="common">Prince sago</name>
    <name type="synonym">Cycas taiwaniana</name>
    <dbReference type="NCBI Taxonomy" id="54799"/>
    <lineage>
        <taxon>Eukaryota</taxon>
        <taxon>Viridiplantae</taxon>
        <taxon>Streptophyta</taxon>
        <taxon>Embryophyta</taxon>
        <taxon>Tracheophyta</taxon>
        <taxon>Spermatophyta</taxon>
        <taxon>Cycadidae</taxon>
        <taxon>Cycadales</taxon>
        <taxon>Cycadaceae</taxon>
        <taxon>Cycas</taxon>
    </lineage>
</organism>
<reference key="1">
    <citation type="journal article" date="2007" name="Mol. Biol. Evol.">
        <title>Chloroplast genome (cpDNA) of Cycas taitungensis and 56 cp protein-coding genes of Gnetum parvifolium: insights into cpDNA evolution and phylogeny of extant seed plants.</title>
        <authorList>
            <person name="Wu C.-S."/>
            <person name="Wang Y.-N."/>
            <person name="Liu S.-M."/>
            <person name="Chaw S.-M."/>
        </authorList>
    </citation>
    <scope>NUCLEOTIDE SEQUENCE [LARGE SCALE GENOMIC DNA]</scope>
</reference>
<geneLocation type="chloroplast"/>